<evidence type="ECO:0000305" key="1"/>
<accession>P90835</accession>
<comment type="similarity">
    <text evidence="1">Belongs to the MIF family.</text>
</comment>
<proteinExistence type="inferred from homology"/>
<feature type="chain" id="PRO_0000158079" description="MIF-like protein mif-3">
    <location>
        <begin position="1"/>
        <end position="146"/>
    </location>
</feature>
<protein>
    <recommendedName>
        <fullName>MIF-like protein mif-3</fullName>
    </recommendedName>
</protein>
<sequence length="146" mass="16411">MPVIKVQTNVKKVSDGFEVRLAIHMAKVMKRPESQIFVSLDMNSRMTRGQLTDPLAVLDVTSSTVLTPILTEEYTVALCEFFSQELALDSDAVLINYRSLSPELIGFNGHILTENRPFISTDRARFIIGVLGIAFLAFLLQFLKYI</sequence>
<organism>
    <name type="scientific">Caenorhabditis elegans</name>
    <dbReference type="NCBI Taxonomy" id="6239"/>
    <lineage>
        <taxon>Eukaryota</taxon>
        <taxon>Metazoa</taxon>
        <taxon>Ecdysozoa</taxon>
        <taxon>Nematoda</taxon>
        <taxon>Chromadorea</taxon>
        <taxon>Rhabditida</taxon>
        <taxon>Rhabditina</taxon>
        <taxon>Rhabditomorpha</taxon>
        <taxon>Rhabditoidea</taxon>
        <taxon>Rhabditidae</taxon>
        <taxon>Peloderinae</taxon>
        <taxon>Caenorhabditis</taxon>
    </lineage>
</organism>
<name>MIF3_CAEEL</name>
<reference key="1">
    <citation type="journal article" date="1998" name="Science">
        <title>Genome sequence of the nematode C. elegans: a platform for investigating biology.</title>
        <authorList>
            <consortium name="The C. elegans sequencing consortium"/>
        </authorList>
    </citation>
    <scope>NUCLEOTIDE SEQUENCE [LARGE SCALE GENOMIC DNA]</scope>
    <source>
        <strain>Bristol N2</strain>
    </source>
</reference>
<dbReference type="EMBL" id="Z71259">
    <property type="protein sequence ID" value="CAA95795.1"/>
    <property type="molecule type" value="Genomic_DNA"/>
</dbReference>
<dbReference type="PIR" id="T20859">
    <property type="entry name" value="T20859"/>
</dbReference>
<dbReference type="RefSeq" id="NP_492069.1">
    <property type="nucleotide sequence ID" value="NM_059668.4"/>
</dbReference>
<dbReference type="SMR" id="P90835"/>
<dbReference type="BioGRID" id="37923">
    <property type="interactions" value="1"/>
</dbReference>
<dbReference type="FunCoup" id="P90835">
    <property type="interactions" value="108"/>
</dbReference>
<dbReference type="IntAct" id="P90835">
    <property type="interactions" value="1"/>
</dbReference>
<dbReference type="STRING" id="6239.F13G3.9.1"/>
<dbReference type="PaxDb" id="6239-F13G3.9"/>
<dbReference type="EnsemblMetazoa" id="F13G3.9.1">
    <property type="protein sequence ID" value="F13G3.9.1"/>
    <property type="gene ID" value="WBGene00003236"/>
</dbReference>
<dbReference type="GeneID" id="172481"/>
<dbReference type="KEGG" id="cel:CELE_F13G3.9"/>
<dbReference type="UCSC" id="F13G3.9">
    <property type="organism name" value="c. elegans"/>
</dbReference>
<dbReference type="AGR" id="WB:WBGene00003236"/>
<dbReference type="CTD" id="172481"/>
<dbReference type="WormBase" id="F13G3.9">
    <property type="protein sequence ID" value="CE09371"/>
    <property type="gene ID" value="WBGene00003236"/>
    <property type="gene designation" value="mif-3"/>
</dbReference>
<dbReference type="eggNOG" id="KOG1759">
    <property type="taxonomic scope" value="Eukaryota"/>
</dbReference>
<dbReference type="HOGENOM" id="CLU_1779088_0_0_1"/>
<dbReference type="InParanoid" id="P90835"/>
<dbReference type="OMA" id="HMAKVMK"/>
<dbReference type="OrthoDB" id="6080988at2759"/>
<dbReference type="PhylomeDB" id="P90835"/>
<dbReference type="PRO" id="PR:P90835"/>
<dbReference type="Proteomes" id="UP000001940">
    <property type="component" value="Chromosome I"/>
</dbReference>
<dbReference type="Bgee" id="WBGene00003236">
    <property type="expression patterns" value="Expressed in embryo and 4 other cell types or tissues"/>
</dbReference>
<dbReference type="GO" id="GO:0005615">
    <property type="term" value="C:extracellular space"/>
    <property type="evidence" value="ECO:0000318"/>
    <property type="project" value="GO_Central"/>
</dbReference>
<dbReference type="GO" id="GO:0005634">
    <property type="term" value="C:nucleus"/>
    <property type="evidence" value="ECO:0000314"/>
    <property type="project" value="WormBase"/>
</dbReference>
<dbReference type="GO" id="GO:0005125">
    <property type="term" value="F:cytokine activity"/>
    <property type="evidence" value="ECO:0000318"/>
    <property type="project" value="GO_Central"/>
</dbReference>
<dbReference type="GO" id="GO:0050178">
    <property type="term" value="F:phenylpyruvate tautomerase activity"/>
    <property type="evidence" value="ECO:0000318"/>
    <property type="project" value="GO_Central"/>
</dbReference>
<dbReference type="GO" id="GO:0010883">
    <property type="term" value="P:regulation of lipid storage"/>
    <property type="evidence" value="ECO:0000315"/>
    <property type="project" value="WormBase"/>
</dbReference>
<dbReference type="GO" id="GO:0090087">
    <property type="term" value="P:regulation of peptide transport"/>
    <property type="evidence" value="ECO:0000315"/>
    <property type="project" value="WormBase"/>
</dbReference>
<dbReference type="Gene3D" id="3.30.429.10">
    <property type="entry name" value="Macrophage Migration Inhibitory Factor"/>
    <property type="match status" value="1"/>
</dbReference>
<dbReference type="InterPro" id="IPR001398">
    <property type="entry name" value="Macrophage_inhib_fac"/>
</dbReference>
<dbReference type="InterPro" id="IPR019829">
    <property type="entry name" value="Macrophage_inhib_fac_CS"/>
</dbReference>
<dbReference type="InterPro" id="IPR014347">
    <property type="entry name" value="Tautomerase/MIF_sf"/>
</dbReference>
<dbReference type="PANTHER" id="PTHR11954">
    <property type="entry name" value="D-DOPACHROME DECARBOXYLASE"/>
    <property type="match status" value="1"/>
</dbReference>
<dbReference type="PANTHER" id="PTHR11954:SF17">
    <property type="entry name" value="MIF-LIKE PROTEIN MIF-3"/>
    <property type="match status" value="1"/>
</dbReference>
<dbReference type="Pfam" id="PF01187">
    <property type="entry name" value="MIF"/>
    <property type="match status" value="1"/>
</dbReference>
<dbReference type="SUPFAM" id="SSF55331">
    <property type="entry name" value="Tautomerase/MIF"/>
    <property type="match status" value="1"/>
</dbReference>
<dbReference type="PROSITE" id="PS01158">
    <property type="entry name" value="MIF"/>
    <property type="match status" value="1"/>
</dbReference>
<gene>
    <name type="primary">mif-3</name>
    <name type="ORF">F13G3.9</name>
</gene>
<keyword id="KW-1185">Reference proteome</keyword>